<dbReference type="EC" id="3.2.2.23"/>
<dbReference type="EC" id="4.2.99.18"/>
<dbReference type="EMBL" id="AL123456">
    <property type="protein sequence ID" value="CCP45727.1"/>
    <property type="molecule type" value="Genomic_DNA"/>
</dbReference>
<dbReference type="PIR" id="D70748">
    <property type="entry name" value="D70748"/>
</dbReference>
<dbReference type="RefSeq" id="NP_217440.1">
    <property type="nucleotide sequence ID" value="NC_000962.3"/>
</dbReference>
<dbReference type="RefSeq" id="WP_003414814.1">
    <property type="nucleotide sequence ID" value="NZ_NVQJ01000006.1"/>
</dbReference>
<dbReference type="SMR" id="P9WNC3"/>
<dbReference type="FunCoup" id="P9WNC3">
    <property type="interactions" value="82"/>
</dbReference>
<dbReference type="STRING" id="83332.Rv2924c"/>
<dbReference type="PaxDb" id="83332-Rv2924c"/>
<dbReference type="DNASU" id="887438"/>
<dbReference type="GeneID" id="45426912"/>
<dbReference type="GeneID" id="887438"/>
<dbReference type="KEGG" id="mtu:Rv2924c"/>
<dbReference type="KEGG" id="mtv:RVBD_2924c"/>
<dbReference type="TubercuList" id="Rv2924c"/>
<dbReference type="eggNOG" id="COG0266">
    <property type="taxonomic scope" value="Bacteria"/>
</dbReference>
<dbReference type="InParanoid" id="P9WNC3"/>
<dbReference type="OrthoDB" id="9800855at2"/>
<dbReference type="PhylomeDB" id="P9WNC3"/>
<dbReference type="BRENDA" id="3.2.2.23">
    <property type="organism ID" value="3445"/>
</dbReference>
<dbReference type="PHI-base" id="PHI:3627"/>
<dbReference type="Proteomes" id="UP000001584">
    <property type="component" value="Chromosome"/>
</dbReference>
<dbReference type="GO" id="GO:0005886">
    <property type="term" value="C:plasma membrane"/>
    <property type="evidence" value="ECO:0007005"/>
    <property type="project" value="MTBBASE"/>
</dbReference>
<dbReference type="GO" id="GO:0034039">
    <property type="term" value="F:8-oxo-7,8-dihydroguanine DNA N-glycosylase activity"/>
    <property type="evidence" value="ECO:0000314"/>
    <property type="project" value="MTBBASE"/>
</dbReference>
<dbReference type="GO" id="GO:0140078">
    <property type="term" value="F:class I DNA-(apurinic or apyrimidinic site) endonuclease activity"/>
    <property type="evidence" value="ECO:0007669"/>
    <property type="project" value="UniProtKB-EC"/>
</dbReference>
<dbReference type="GO" id="GO:0003684">
    <property type="term" value="F:damaged DNA binding"/>
    <property type="evidence" value="ECO:0007669"/>
    <property type="project" value="InterPro"/>
</dbReference>
<dbReference type="GO" id="GO:0003906">
    <property type="term" value="F:DNA-(apurinic or apyrimidinic site) endonuclease activity"/>
    <property type="evidence" value="ECO:0000318"/>
    <property type="project" value="GO_Central"/>
</dbReference>
<dbReference type="GO" id="GO:0003690">
    <property type="term" value="F:double-stranded DNA binding"/>
    <property type="evidence" value="ECO:0000314"/>
    <property type="project" value="MTBBASE"/>
</dbReference>
<dbReference type="GO" id="GO:0008534">
    <property type="term" value="F:oxidized purine nucleobase lesion DNA N-glycosylase activity"/>
    <property type="evidence" value="ECO:0000314"/>
    <property type="project" value="MTBBASE"/>
</dbReference>
<dbReference type="GO" id="GO:0008270">
    <property type="term" value="F:zinc ion binding"/>
    <property type="evidence" value="ECO:0007669"/>
    <property type="project" value="UniProtKB-UniRule"/>
</dbReference>
<dbReference type="GO" id="GO:0006284">
    <property type="term" value="P:base-excision repair"/>
    <property type="evidence" value="ECO:0000314"/>
    <property type="project" value="MTBBASE"/>
</dbReference>
<dbReference type="GO" id="GO:0006281">
    <property type="term" value="P:DNA repair"/>
    <property type="evidence" value="ECO:0000314"/>
    <property type="project" value="MTBBASE"/>
</dbReference>
<dbReference type="GO" id="GO:0006979">
    <property type="term" value="P:response to oxidative stress"/>
    <property type="evidence" value="ECO:0000314"/>
    <property type="project" value="MTBBASE"/>
</dbReference>
<dbReference type="CDD" id="cd08966">
    <property type="entry name" value="EcFpg-like_N"/>
    <property type="match status" value="1"/>
</dbReference>
<dbReference type="FunFam" id="1.10.8.50:FF:000003">
    <property type="entry name" value="Formamidopyrimidine-DNA glycosylase"/>
    <property type="match status" value="1"/>
</dbReference>
<dbReference type="FunFam" id="3.20.190.10:FF:000006">
    <property type="entry name" value="Formamidopyrimidine-DNA glycosylase"/>
    <property type="match status" value="1"/>
</dbReference>
<dbReference type="Gene3D" id="1.10.8.50">
    <property type="match status" value="1"/>
</dbReference>
<dbReference type="Gene3D" id="3.20.190.10">
    <property type="entry name" value="MutM-like, N-terminal"/>
    <property type="match status" value="1"/>
</dbReference>
<dbReference type="HAMAP" id="MF_00103">
    <property type="entry name" value="Fapy_DNA_glycosyl"/>
    <property type="match status" value="1"/>
</dbReference>
<dbReference type="InterPro" id="IPR015886">
    <property type="entry name" value="DNA_glyclase/AP_lyase_DNA-bd"/>
</dbReference>
<dbReference type="InterPro" id="IPR015887">
    <property type="entry name" value="DNA_glyclase_Znf_dom_DNA_BS"/>
</dbReference>
<dbReference type="InterPro" id="IPR020629">
    <property type="entry name" value="Formamido-pyr_DNA_Glyclase"/>
</dbReference>
<dbReference type="InterPro" id="IPR012319">
    <property type="entry name" value="FPG_cat"/>
</dbReference>
<dbReference type="InterPro" id="IPR035937">
    <property type="entry name" value="MutM-like_N-ter"/>
</dbReference>
<dbReference type="InterPro" id="IPR010979">
    <property type="entry name" value="Ribosomal_uS13-like_H2TH"/>
</dbReference>
<dbReference type="InterPro" id="IPR000214">
    <property type="entry name" value="Znf_DNA_glyclase/AP_lyase"/>
</dbReference>
<dbReference type="InterPro" id="IPR010663">
    <property type="entry name" value="Znf_FPG/IleRS"/>
</dbReference>
<dbReference type="NCBIfam" id="TIGR00577">
    <property type="entry name" value="fpg"/>
    <property type="match status" value="1"/>
</dbReference>
<dbReference type="NCBIfam" id="NF002211">
    <property type="entry name" value="PRK01103.1"/>
    <property type="match status" value="1"/>
</dbReference>
<dbReference type="PANTHER" id="PTHR22993">
    <property type="entry name" value="FORMAMIDOPYRIMIDINE-DNA GLYCOSYLASE"/>
    <property type="match status" value="1"/>
</dbReference>
<dbReference type="PANTHER" id="PTHR22993:SF9">
    <property type="entry name" value="FORMAMIDOPYRIMIDINE-DNA GLYCOSYLASE"/>
    <property type="match status" value="1"/>
</dbReference>
<dbReference type="Pfam" id="PF01149">
    <property type="entry name" value="Fapy_DNA_glyco"/>
    <property type="match status" value="1"/>
</dbReference>
<dbReference type="Pfam" id="PF06831">
    <property type="entry name" value="H2TH"/>
    <property type="match status" value="1"/>
</dbReference>
<dbReference type="Pfam" id="PF06827">
    <property type="entry name" value="zf-FPG_IleRS"/>
    <property type="match status" value="1"/>
</dbReference>
<dbReference type="SMART" id="SM00898">
    <property type="entry name" value="Fapy_DNA_glyco"/>
    <property type="match status" value="1"/>
</dbReference>
<dbReference type="SMART" id="SM01232">
    <property type="entry name" value="H2TH"/>
    <property type="match status" value="1"/>
</dbReference>
<dbReference type="SUPFAM" id="SSF57716">
    <property type="entry name" value="Glucocorticoid receptor-like (DNA-binding domain)"/>
    <property type="match status" value="1"/>
</dbReference>
<dbReference type="SUPFAM" id="SSF81624">
    <property type="entry name" value="N-terminal domain of MutM-like DNA repair proteins"/>
    <property type="match status" value="1"/>
</dbReference>
<dbReference type="SUPFAM" id="SSF46946">
    <property type="entry name" value="S13-like H2TH domain"/>
    <property type="match status" value="1"/>
</dbReference>
<dbReference type="PROSITE" id="PS51068">
    <property type="entry name" value="FPG_CAT"/>
    <property type="match status" value="1"/>
</dbReference>
<dbReference type="PROSITE" id="PS01242">
    <property type="entry name" value="ZF_FPG_1"/>
    <property type="match status" value="1"/>
</dbReference>
<dbReference type="PROSITE" id="PS51066">
    <property type="entry name" value="ZF_FPG_2"/>
    <property type="match status" value="1"/>
</dbReference>
<name>FPG1_MYCTU</name>
<gene>
    <name type="primary">fpg1</name>
    <name type="synonym">mutM</name>
    <name type="ordered locus">Rv2924c</name>
    <name type="ORF">MTCY338.13c</name>
</gene>
<feature type="initiator methionine" description="Removed" evidence="1">
    <location>
        <position position="1"/>
    </location>
</feature>
<feature type="chain" id="PRO_0000170840" description="Formamidopyrimidine-DNA glycosylase 1">
    <location>
        <begin position="2"/>
        <end position="289"/>
    </location>
</feature>
<feature type="zinc finger region" description="FPG-type">
    <location>
        <begin position="251"/>
        <end position="285"/>
    </location>
</feature>
<feature type="active site" description="Schiff-base intermediate with DNA" evidence="1">
    <location>
        <position position="2"/>
    </location>
</feature>
<feature type="active site" description="Proton donor" evidence="1">
    <location>
        <position position="3"/>
    </location>
</feature>
<feature type="active site" description="Proton donor; for beta-elimination activity" evidence="1">
    <location>
        <position position="61"/>
    </location>
</feature>
<feature type="active site" description="Proton donor; for delta-elimination activity" evidence="1">
    <location>
        <position position="275"/>
    </location>
</feature>
<feature type="binding site" evidence="1">
    <location>
        <position position="100"/>
    </location>
    <ligand>
        <name>DNA</name>
        <dbReference type="ChEBI" id="CHEBI:16991"/>
    </ligand>
</feature>
<feature type="binding site" evidence="1">
    <location>
        <position position="119"/>
    </location>
    <ligand>
        <name>DNA</name>
        <dbReference type="ChEBI" id="CHEBI:16991"/>
    </ligand>
</feature>
<feature type="binding site" evidence="1">
    <location>
        <position position="165"/>
    </location>
    <ligand>
        <name>DNA</name>
        <dbReference type="ChEBI" id="CHEBI:16991"/>
    </ligand>
</feature>
<reference key="1">
    <citation type="journal article" date="1998" name="Nature">
        <title>Deciphering the biology of Mycobacterium tuberculosis from the complete genome sequence.</title>
        <authorList>
            <person name="Cole S.T."/>
            <person name="Brosch R."/>
            <person name="Parkhill J."/>
            <person name="Garnier T."/>
            <person name="Churcher C.M."/>
            <person name="Harris D.E."/>
            <person name="Gordon S.V."/>
            <person name="Eiglmeier K."/>
            <person name="Gas S."/>
            <person name="Barry C.E. III"/>
            <person name="Tekaia F."/>
            <person name="Badcock K."/>
            <person name="Basham D."/>
            <person name="Brown D."/>
            <person name="Chillingworth T."/>
            <person name="Connor R."/>
            <person name="Davies R.M."/>
            <person name="Devlin K."/>
            <person name="Feltwell T."/>
            <person name="Gentles S."/>
            <person name="Hamlin N."/>
            <person name="Holroyd S."/>
            <person name="Hornsby T."/>
            <person name="Jagels K."/>
            <person name="Krogh A."/>
            <person name="McLean J."/>
            <person name="Moule S."/>
            <person name="Murphy L.D."/>
            <person name="Oliver S."/>
            <person name="Osborne J."/>
            <person name="Quail M.A."/>
            <person name="Rajandream M.A."/>
            <person name="Rogers J."/>
            <person name="Rutter S."/>
            <person name="Seeger K."/>
            <person name="Skelton S."/>
            <person name="Squares S."/>
            <person name="Squares R."/>
            <person name="Sulston J.E."/>
            <person name="Taylor K."/>
            <person name="Whitehead S."/>
            <person name="Barrell B.G."/>
        </authorList>
    </citation>
    <scope>NUCLEOTIDE SEQUENCE [LARGE SCALE GENOMIC DNA]</scope>
    <source>
        <strain>ATCC 25618 / H37Rv</strain>
    </source>
</reference>
<reference key="2">
    <citation type="journal article" date="2007" name="DNA Repair">
        <title>A distinct role of formamidopyrimidine DNA glycosylase (MutM) in down-regulation of accumulation of G, C mutations and protection against oxidative stress in mycobacteria.</title>
        <authorList>
            <person name="Jain R."/>
            <person name="Kumar P."/>
            <person name="Varshney U."/>
        </authorList>
    </citation>
    <scope>FUNCTION</scope>
    <source>
        <strain>ATCC 25618 / H37Rv</strain>
    </source>
</reference>
<reference key="3">
    <citation type="journal article" date="2009" name="FEMS Immunol. Med. Microbiol.">
        <title>Characterization of the major formamidopyrimidine-DNA glycosylase homolog in Mycobacterium tuberculosis and its linkage to variable tandem repeats.</title>
        <authorList>
            <person name="Olsen I."/>
            <person name="Balasingham S.V."/>
            <person name="Davidsen T."/>
            <person name="Debebe E."/>
            <person name="Rodland E.A."/>
            <person name="van Soolingen D."/>
            <person name="Kremer K."/>
            <person name="Alseth I."/>
            <person name="Tonjum T."/>
        </authorList>
    </citation>
    <scope>FUNCTION</scope>
    <scope>SUBSTRATES</scope>
    <scope>INDUCTION</scope>
    <source>
        <strain>ATCC 25618 / H37Rv</strain>
    </source>
</reference>
<reference key="4">
    <citation type="journal article" date="2010" name="DNA Repair">
        <title>The oxidative DNA glycosylases of Mycobacterium tuberculosis exhibit different substrate preferences from their Escherichia coli counterparts.</title>
        <authorList>
            <person name="Guo Y."/>
            <person name="Bandaru V."/>
            <person name="Jaruga P."/>
            <person name="Zhao X."/>
            <person name="Burrows C.J."/>
            <person name="Iwai S."/>
            <person name="Dizdaroglu M."/>
            <person name="Bond J.P."/>
            <person name="Wallace S.S."/>
        </authorList>
    </citation>
    <scope>FUNCTION</scope>
    <scope>SUBSTRATES</scope>
    <scope>DNA-BINDING</scope>
    <source>
        <strain>ATCC 25618 / H37Rv</strain>
    </source>
</reference>
<reference key="5">
    <citation type="journal article" date="2011" name="Mol. Cell. Proteomics">
        <title>Proteogenomic analysis of Mycobacterium tuberculosis by high resolution mass spectrometry.</title>
        <authorList>
            <person name="Kelkar D.S."/>
            <person name="Kumar D."/>
            <person name="Kumar P."/>
            <person name="Balakrishnan L."/>
            <person name="Muthusamy B."/>
            <person name="Yadav A.K."/>
            <person name="Shrivastava P."/>
            <person name="Marimuthu A."/>
            <person name="Anand S."/>
            <person name="Sundaram H."/>
            <person name="Kingsbury R."/>
            <person name="Harsha H.C."/>
            <person name="Nair B."/>
            <person name="Prasad T.S."/>
            <person name="Chauhan D.S."/>
            <person name="Katoch K."/>
            <person name="Katoch V.M."/>
            <person name="Kumar P."/>
            <person name="Chaerkady R."/>
            <person name="Ramachandran S."/>
            <person name="Dash D."/>
            <person name="Pandey A."/>
        </authorList>
    </citation>
    <scope>IDENTIFICATION BY MASS SPECTROMETRY [LARGE SCALE ANALYSIS]</scope>
    <source>
        <strain>ATCC 25618 / H37Rv</strain>
    </source>
</reference>
<reference key="6">
    <citation type="journal article" date="2011" name="Tuberculosis">
        <title>Base excision and nucleotide excision repair pathways in mycobacteria.</title>
        <authorList>
            <person name="Kurthkoti K."/>
            <person name="Varshney U."/>
        </authorList>
    </citation>
    <scope>REVIEW</scope>
</reference>
<sequence>MPELPEVEVVRRGLQAHVTGRTITEVRVHHPRAVRRHDAGPADLTARLRGARINGTDRRGKYLWLTLNTAGVHRPTDTALVVHLGMSGQMLLGAVPCAAHVRISALLDDGTVLSFADQRTFGGWLLADLVTVDGSVVPVPVAHLARDPLDPRFDCDAVVKVLRRKHSELKRQLLDQRVVSGIGNIYADEALWRAKVNGAHVAATLRCRRLGAVLHAAADVMREALAKGGTSFDSLYVNVNGESGYFERSLDAYGREGENCRRCGAVIRRERFMNRSSFYCPRCQPRPRK</sequence>
<organism>
    <name type="scientific">Mycobacterium tuberculosis (strain ATCC 25618 / H37Rv)</name>
    <dbReference type="NCBI Taxonomy" id="83332"/>
    <lineage>
        <taxon>Bacteria</taxon>
        <taxon>Bacillati</taxon>
        <taxon>Actinomycetota</taxon>
        <taxon>Actinomycetes</taxon>
        <taxon>Mycobacteriales</taxon>
        <taxon>Mycobacteriaceae</taxon>
        <taxon>Mycobacterium</taxon>
        <taxon>Mycobacterium tuberculosis complex</taxon>
    </lineage>
</organism>
<comment type="function">
    <text evidence="2 3 4">Involved in base excision repair of DNA damaged by oxidation or by mutagenic agents. Acts as a DNA glycosylase that recognizes and removes damaged bases. Has a preference for oxidized purines, such as 7,8-dihydro-8-oxoguanine (8-oxoG) when paired with C, G or T, as well as methyl-faPy (formanidopyrimidine residues) in poly(dG-dC) and spiroiminodihydantoin:C base pairs. Unlike its E.coli ortholog has no activity on 8-oxoG:A. Has AP (apurinic/apyrimidinic) lyase activity and introduces nicks in the DNA strand. Cleaves the DNA backbone by beta-delta elimination to generate a single-strand break at the site of the removed base with both 3'- and 5'-phosphates. Cleaves ssDNA containing an AP site. Complements the H(2)O(2) sensitivity of an M.smegmatis fpg disruption mutant; upon expression in M.smegmatis excises 8-oxoG from dsDNA.</text>
</comment>
<comment type="catalytic activity">
    <reaction>
        <text>Hydrolysis of DNA containing ring-opened 7-methylguanine residues, releasing 2,6-diamino-4-hydroxy-5-(N-methyl)formamidopyrimidine.</text>
        <dbReference type="EC" id="3.2.2.23"/>
    </reaction>
</comment>
<comment type="catalytic activity">
    <reaction>
        <text>2'-deoxyribonucleotide-(2'-deoxyribose 5'-phosphate)-2'-deoxyribonucleotide-DNA = a 3'-end 2'-deoxyribonucleotide-(2,3-dehydro-2,3-deoxyribose 5'-phosphate)-DNA + a 5'-end 5'-phospho-2'-deoxyribonucleoside-DNA + H(+)</text>
        <dbReference type="Rhea" id="RHEA:66592"/>
        <dbReference type="Rhea" id="RHEA-COMP:13180"/>
        <dbReference type="Rhea" id="RHEA-COMP:16897"/>
        <dbReference type="Rhea" id="RHEA-COMP:17067"/>
        <dbReference type="ChEBI" id="CHEBI:15378"/>
        <dbReference type="ChEBI" id="CHEBI:136412"/>
        <dbReference type="ChEBI" id="CHEBI:157695"/>
        <dbReference type="ChEBI" id="CHEBI:167181"/>
        <dbReference type="EC" id="4.2.99.18"/>
    </reaction>
</comment>
<comment type="cofactor">
    <cofactor evidence="1">
        <name>Zn(2+)</name>
        <dbReference type="ChEBI" id="CHEBI:29105"/>
    </cofactor>
    <text evidence="1">Binds 1 zinc ion per subunit.</text>
</comment>
<comment type="subunit">
    <text evidence="1">Monomer.</text>
</comment>
<comment type="induction">
    <text evidence="3">Expressed in mid-log phase.</text>
</comment>
<comment type="similarity">
    <text evidence="5">Belongs to the FPG family.</text>
</comment>
<accession>P9WNC3</accession>
<accession>L0TDY9</accession>
<accession>P64150</accession>
<accession>Q10959</accession>
<proteinExistence type="evidence at protein level"/>
<evidence type="ECO:0000250" key="1"/>
<evidence type="ECO:0000269" key="2">
    <source>
    </source>
</evidence>
<evidence type="ECO:0000269" key="3">
    <source>
    </source>
</evidence>
<evidence type="ECO:0000269" key="4">
    <source>
    </source>
</evidence>
<evidence type="ECO:0000305" key="5"/>
<protein>
    <recommendedName>
        <fullName>Formamidopyrimidine-DNA glycosylase 1</fullName>
        <shortName>Fapy-DNA glycosylase 1</shortName>
        <ecNumber>3.2.2.23</ecNumber>
    </recommendedName>
    <alternativeName>
        <fullName>DNA-(apurinic or apyrimidinic site) lyase MutM 1</fullName>
        <shortName>AP lyase MutM 1</shortName>
        <ecNumber>4.2.99.18</ecNumber>
    </alternativeName>
</protein>
<keyword id="KW-0227">DNA damage</keyword>
<keyword id="KW-0234">DNA repair</keyword>
<keyword id="KW-0238">DNA-binding</keyword>
<keyword id="KW-0326">Glycosidase</keyword>
<keyword id="KW-0378">Hydrolase</keyword>
<keyword id="KW-0456">Lyase</keyword>
<keyword id="KW-0479">Metal-binding</keyword>
<keyword id="KW-0511">Multifunctional enzyme</keyword>
<keyword id="KW-1185">Reference proteome</keyword>
<keyword id="KW-0862">Zinc</keyword>
<keyword id="KW-0863">Zinc-finger</keyword>